<proteinExistence type="inferred from homology"/>
<comment type="similarity">
    <text evidence="1">Belongs to the universal ribosomal protein uS9 family.</text>
</comment>
<sequence length="155" mass="16690">MADLSSLKDLGTVSEAAAPAHVRKVDSLGRSYATGKRKNAVARVWVKPGSGKITVNGKEFAEYFARPVLQMILRQPIVAAARDGQFDIVATVAGGGLSGQAGAVRHGVSKALTYFEPGLRAVLKKGGFLTRDSRVVERKKYGKAKARRSFQFSKR</sequence>
<keyword id="KW-0687">Ribonucleoprotein</keyword>
<keyword id="KW-0689">Ribosomal protein</keyword>
<feature type="chain" id="PRO_1000051304" description="Small ribosomal subunit protein uS9">
    <location>
        <begin position="1"/>
        <end position="155"/>
    </location>
</feature>
<organism>
    <name type="scientific">Rhizobium johnstonii (strain DSM 114642 / LMG 32736 / 3841)</name>
    <name type="common">Rhizobium leguminosarum bv. viciae</name>
    <dbReference type="NCBI Taxonomy" id="216596"/>
    <lineage>
        <taxon>Bacteria</taxon>
        <taxon>Pseudomonadati</taxon>
        <taxon>Pseudomonadota</taxon>
        <taxon>Alphaproteobacteria</taxon>
        <taxon>Hyphomicrobiales</taxon>
        <taxon>Rhizobiaceae</taxon>
        <taxon>Rhizobium/Agrobacterium group</taxon>
        <taxon>Rhizobium</taxon>
        <taxon>Rhizobium johnstonii</taxon>
    </lineage>
</organism>
<protein>
    <recommendedName>
        <fullName evidence="1">Small ribosomal subunit protein uS9</fullName>
    </recommendedName>
    <alternativeName>
        <fullName evidence="2">30S ribosomal protein S9</fullName>
    </alternativeName>
</protein>
<gene>
    <name evidence="1" type="primary">rpsI</name>
    <name type="ordered locus">RL1672</name>
</gene>
<accession>Q1MIP3</accession>
<dbReference type="EMBL" id="AM236080">
    <property type="protein sequence ID" value="CAK07167.1"/>
    <property type="molecule type" value="Genomic_DNA"/>
</dbReference>
<dbReference type="RefSeq" id="WP_003558419.1">
    <property type="nucleotide sequence ID" value="NC_008380.1"/>
</dbReference>
<dbReference type="SMR" id="Q1MIP3"/>
<dbReference type="EnsemblBacteria" id="CAK07167">
    <property type="protein sequence ID" value="CAK07167"/>
    <property type="gene ID" value="RL1672"/>
</dbReference>
<dbReference type="GeneID" id="67484860"/>
<dbReference type="KEGG" id="rle:RL1672"/>
<dbReference type="eggNOG" id="COG0103">
    <property type="taxonomic scope" value="Bacteria"/>
</dbReference>
<dbReference type="HOGENOM" id="CLU_046483_2_0_5"/>
<dbReference type="Proteomes" id="UP000006575">
    <property type="component" value="Chromosome"/>
</dbReference>
<dbReference type="GO" id="GO:0022627">
    <property type="term" value="C:cytosolic small ribosomal subunit"/>
    <property type="evidence" value="ECO:0007669"/>
    <property type="project" value="TreeGrafter"/>
</dbReference>
<dbReference type="GO" id="GO:0003723">
    <property type="term" value="F:RNA binding"/>
    <property type="evidence" value="ECO:0007669"/>
    <property type="project" value="TreeGrafter"/>
</dbReference>
<dbReference type="GO" id="GO:0003735">
    <property type="term" value="F:structural constituent of ribosome"/>
    <property type="evidence" value="ECO:0007669"/>
    <property type="project" value="InterPro"/>
</dbReference>
<dbReference type="GO" id="GO:0006412">
    <property type="term" value="P:translation"/>
    <property type="evidence" value="ECO:0007669"/>
    <property type="project" value="UniProtKB-UniRule"/>
</dbReference>
<dbReference type="FunFam" id="3.30.230.10:FF:000001">
    <property type="entry name" value="30S ribosomal protein S9"/>
    <property type="match status" value="1"/>
</dbReference>
<dbReference type="Gene3D" id="3.30.230.10">
    <property type="match status" value="1"/>
</dbReference>
<dbReference type="HAMAP" id="MF_00532_B">
    <property type="entry name" value="Ribosomal_uS9_B"/>
    <property type="match status" value="1"/>
</dbReference>
<dbReference type="InterPro" id="IPR020568">
    <property type="entry name" value="Ribosomal_Su5_D2-typ_SF"/>
</dbReference>
<dbReference type="InterPro" id="IPR000754">
    <property type="entry name" value="Ribosomal_uS9"/>
</dbReference>
<dbReference type="InterPro" id="IPR023035">
    <property type="entry name" value="Ribosomal_uS9_bac/plastid"/>
</dbReference>
<dbReference type="InterPro" id="IPR020574">
    <property type="entry name" value="Ribosomal_uS9_CS"/>
</dbReference>
<dbReference type="InterPro" id="IPR014721">
    <property type="entry name" value="Ribsml_uS5_D2-typ_fold_subgr"/>
</dbReference>
<dbReference type="NCBIfam" id="NF001099">
    <property type="entry name" value="PRK00132.1"/>
    <property type="match status" value="1"/>
</dbReference>
<dbReference type="PANTHER" id="PTHR21569">
    <property type="entry name" value="RIBOSOMAL PROTEIN S9"/>
    <property type="match status" value="1"/>
</dbReference>
<dbReference type="PANTHER" id="PTHR21569:SF1">
    <property type="entry name" value="SMALL RIBOSOMAL SUBUNIT PROTEIN US9M"/>
    <property type="match status" value="1"/>
</dbReference>
<dbReference type="Pfam" id="PF00380">
    <property type="entry name" value="Ribosomal_S9"/>
    <property type="match status" value="1"/>
</dbReference>
<dbReference type="SUPFAM" id="SSF54211">
    <property type="entry name" value="Ribosomal protein S5 domain 2-like"/>
    <property type="match status" value="1"/>
</dbReference>
<dbReference type="PROSITE" id="PS00360">
    <property type="entry name" value="RIBOSOMAL_S9"/>
    <property type="match status" value="1"/>
</dbReference>
<evidence type="ECO:0000255" key="1">
    <source>
        <dbReference type="HAMAP-Rule" id="MF_00532"/>
    </source>
</evidence>
<evidence type="ECO:0000305" key="2"/>
<name>RS9_RHIJ3</name>
<reference key="1">
    <citation type="journal article" date="2006" name="Genome Biol.">
        <title>The genome of Rhizobium leguminosarum has recognizable core and accessory components.</title>
        <authorList>
            <person name="Young J.P.W."/>
            <person name="Crossman L.C."/>
            <person name="Johnston A.W.B."/>
            <person name="Thomson N.R."/>
            <person name="Ghazoui Z.F."/>
            <person name="Hull K.H."/>
            <person name="Wexler M."/>
            <person name="Curson A.R.J."/>
            <person name="Todd J.D."/>
            <person name="Poole P.S."/>
            <person name="Mauchline T.H."/>
            <person name="East A.K."/>
            <person name="Quail M.A."/>
            <person name="Churcher C."/>
            <person name="Arrowsmith C."/>
            <person name="Cherevach I."/>
            <person name="Chillingworth T."/>
            <person name="Clarke K."/>
            <person name="Cronin A."/>
            <person name="Davis P."/>
            <person name="Fraser A."/>
            <person name="Hance Z."/>
            <person name="Hauser H."/>
            <person name="Jagels K."/>
            <person name="Moule S."/>
            <person name="Mungall K."/>
            <person name="Norbertczak H."/>
            <person name="Rabbinowitsch E."/>
            <person name="Sanders M."/>
            <person name="Simmonds M."/>
            <person name="Whitehead S."/>
            <person name="Parkhill J."/>
        </authorList>
    </citation>
    <scope>NUCLEOTIDE SEQUENCE [LARGE SCALE GENOMIC DNA]</scope>
    <source>
        <strain>DSM 114642 / LMG 32736 / 3841</strain>
    </source>
</reference>